<protein>
    <recommendedName>
        <fullName>CBL-interacting serine/threonine-protein kinase 2</fullName>
        <ecNumber>2.7.11.1</ecNumber>
    </recommendedName>
    <alternativeName>
        <fullName>SNF1-related kinase 3.2</fullName>
    </alternativeName>
    <alternativeName>
        <fullName>SOS2-like protein kinase PKS16</fullName>
    </alternativeName>
</protein>
<keyword id="KW-0067">ATP-binding</keyword>
<keyword id="KW-0418">Kinase</keyword>
<keyword id="KW-0464">Manganese</keyword>
<keyword id="KW-0547">Nucleotide-binding</keyword>
<keyword id="KW-0597">Phosphoprotein</keyword>
<keyword id="KW-1185">Reference proteome</keyword>
<keyword id="KW-0723">Serine/threonine-protein kinase</keyword>
<keyword id="KW-0808">Transferase</keyword>
<feature type="chain" id="PRO_0000337205" description="CBL-interacting serine/threonine-protein kinase 2">
    <location>
        <begin position="1"/>
        <end position="456"/>
    </location>
</feature>
<feature type="domain" description="Protein kinase" evidence="4">
    <location>
        <begin position="12"/>
        <end position="266"/>
    </location>
</feature>
<feature type="domain" description="NAF" evidence="5">
    <location>
        <begin position="309"/>
        <end position="333"/>
    </location>
</feature>
<feature type="region of interest" description="Activation loop" evidence="1">
    <location>
        <begin position="152"/>
        <end position="181"/>
    </location>
</feature>
<feature type="region of interest" description="Disordered" evidence="7">
    <location>
        <begin position="280"/>
        <end position="309"/>
    </location>
</feature>
<feature type="region of interest" description="PPI" evidence="1">
    <location>
        <begin position="338"/>
        <end position="367"/>
    </location>
</feature>
<feature type="active site" description="Proton acceptor" evidence="4 6">
    <location>
        <position position="134"/>
    </location>
</feature>
<feature type="binding site" evidence="4">
    <location>
        <begin position="18"/>
        <end position="26"/>
    </location>
    <ligand>
        <name>ATP</name>
        <dbReference type="ChEBI" id="CHEBI:30616"/>
    </ligand>
</feature>
<feature type="binding site" evidence="4">
    <location>
        <position position="41"/>
    </location>
    <ligand>
        <name>ATP</name>
        <dbReference type="ChEBI" id="CHEBI:30616"/>
    </ligand>
</feature>
<feature type="modified residue" description="Phosphoserine" evidence="3">
    <location>
        <position position="156"/>
    </location>
</feature>
<feature type="modified residue" description="Phosphothreonine" evidence="2">
    <location>
        <position position="170"/>
    </location>
</feature>
<feature type="sequence conflict" description="In Ref. 1; AAF86506." evidence="10" ref="1">
    <original>F</original>
    <variation>S</variation>
    <location>
        <position position="28"/>
    </location>
</feature>
<proteinExistence type="evidence at protein level"/>
<accession>Q9LYQ8</accession>
<accession>Q9LKD0</accession>
<organism>
    <name type="scientific">Arabidopsis thaliana</name>
    <name type="common">Mouse-ear cress</name>
    <dbReference type="NCBI Taxonomy" id="3702"/>
    <lineage>
        <taxon>Eukaryota</taxon>
        <taxon>Viridiplantae</taxon>
        <taxon>Streptophyta</taxon>
        <taxon>Embryophyta</taxon>
        <taxon>Tracheophyta</taxon>
        <taxon>Spermatophyta</taxon>
        <taxon>Magnoliopsida</taxon>
        <taxon>eudicotyledons</taxon>
        <taxon>Gunneridae</taxon>
        <taxon>Pentapetalae</taxon>
        <taxon>rosids</taxon>
        <taxon>malvids</taxon>
        <taxon>Brassicales</taxon>
        <taxon>Brassicaceae</taxon>
        <taxon>Camelineae</taxon>
        <taxon>Arabidopsis</taxon>
    </lineage>
</organism>
<gene>
    <name type="primary">CIPK2</name>
    <name type="synonym">PKS16</name>
    <name type="synonym">SnRK3.2</name>
    <name type="ordered locus">At5g07070</name>
    <name type="ORF">T28J14.10</name>
</gene>
<evidence type="ECO:0000250" key="1"/>
<evidence type="ECO:0000250" key="2">
    <source>
        <dbReference type="UniProtKB" id="Q38997"/>
    </source>
</evidence>
<evidence type="ECO:0000250" key="3">
    <source>
        <dbReference type="UniProtKB" id="Q93V58"/>
    </source>
</evidence>
<evidence type="ECO:0000255" key="4">
    <source>
        <dbReference type="PROSITE-ProRule" id="PRU00159"/>
    </source>
</evidence>
<evidence type="ECO:0000255" key="5">
    <source>
        <dbReference type="PROSITE-ProRule" id="PRU00256"/>
    </source>
</evidence>
<evidence type="ECO:0000255" key="6">
    <source>
        <dbReference type="PROSITE-ProRule" id="PRU10027"/>
    </source>
</evidence>
<evidence type="ECO:0000256" key="7">
    <source>
        <dbReference type="SAM" id="MobiDB-lite"/>
    </source>
</evidence>
<evidence type="ECO:0000269" key="8">
    <source>
    </source>
</evidence>
<evidence type="ECO:0000269" key="9">
    <source>
    </source>
</evidence>
<evidence type="ECO:0000305" key="10"/>
<reference key="1">
    <citation type="journal article" date="2000" name="Plant Physiol.">
        <title>Interaction specificity of Arabidopsis calcineurin B-like calcium sensors and their target kinases.</title>
        <authorList>
            <person name="Kim K.-N."/>
            <person name="Cheong Y.H."/>
            <person name="Gupta R."/>
            <person name="Luan S."/>
        </authorList>
    </citation>
    <scope>NUCLEOTIDE SEQUENCE [MRNA]</scope>
    <scope>INTERACTION WITH CBL3</scope>
    <source>
        <strain>cv. Columbia</strain>
    </source>
</reference>
<reference key="2">
    <citation type="journal article" date="1998" name="DNA Res.">
        <title>Structural analysis of Arabidopsis thaliana chromosome 5. V. Sequence features of the regions of 1,381,565 bp covered by twenty one physically assigned P1 and TAC clones.</title>
        <authorList>
            <person name="Kaneko T."/>
            <person name="Kotani H."/>
            <person name="Nakamura Y."/>
            <person name="Sato S."/>
            <person name="Asamizu E."/>
            <person name="Miyajima N."/>
            <person name="Tabata S."/>
        </authorList>
    </citation>
    <scope>NUCLEOTIDE SEQUENCE [LARGE SCALE GENOMIC DNA]</scope>
    <source>
        <strain>cv. Columbia</strain>
    </source>
</reference>
<reference key="3">
    <citation type="journal article" date="2000" name="Nature">
        <title>Sequence and analysis of chromosome 5 of the plant Arabidopsis thaliana.</title>
        <authorList>
            <person name="Tabata S."/>
            <person name="Kaneko T."/>
            <person name="Nakamura Y."/>
            <person name="Kotani H."/>
            <person name="Kato T."/>
            <person name="Asamizu E."/>
            <person name="Miyajima N."/>
            <person name="Sasamoto S."/>
            <person name="Kimura T."/>
            <person name="Hosouchi T."/>
            <person name="Kawashima K."/>
            <person name="Kohara M."/>
            <person name="Matsumoto M."/>
            <person name="Matsuno A."/>
            <person name="Muraki A."/>
            <person name="Nakayama S."/>
            <person name="Nakazaki N."/>
            <person name="Naruo K."/>
            <person name="Okumura S."/>
            <person name="Shinpo S."/>
            <person name="Takeuchi C."/>
            <person name="Wada T."/>
            <person name="Watanabe A."/>
            <person name="Yamada M."/>
            <person name="Yasuda M."/>
            <person name="Sato S."/>
            <person name="de la Bastide M."/>
            <person name="Huang E."/>
            <person name="Spiegel L."/>
            <person name="Gnoj L."/>
            <person name="O'Shaughnessy A."/>
            <person name="Preston R."/>
            <person name="Habermann K."/>
            <person name="Murray J."/>
            <person name="Johnson D."/>
            <person name="Rohlfing T."/>
            <person name="Nelson J."/>
            <person name="Stoneking T."/>
            <person name="Pepin K."/>
            <person name="Spieth J."/>
            <person name="Sekhon M."/>
            <person name="Armstrong J."/>
            <person name="Becker M."/>
            <person name="Belter E."/>
            <person name="Cordum H."/>
            <person name="Cordes M."/>
            <person name="Courtney L."/>
            <person name="Courtney W."/>
            <person name="Dante M."/>
            <person name="Du H."/>
            <person name="Edwards J."/>
            <person name="Fryman J."/>
            <person name="Haakensen B."/>
            <person name="Lamar E."/>
            <person name="Latreille P."/>
            <person name="Leonard S."/>
            <person name="Meyer R."/>
            <person name="Mulvaney E."/>
            <person name="Ozersky P."/>
            <person name="Riley A."/>
            <person name="Strowmatt C."/>
            <person name="Wagner-McPherson C."/>
            <person name="Wollam A."/>
            <person name="Yoakum M."/>
            <person name="Bell M."/>
            <person name="Dedhia N."/>
            <person name="Parnell L."/>
            <person name="Shah R."/>
            <person name="Rodriguez M."/>
            <person name="Hoon See L."/>
            <person name="Vil D."/>
            <person name="Baker J."/>
            <person name="Kirchoff K."/>
            <person name="Toth K."/>
            <person name="King L."/>
            <person name="Bahret A."/>
            <person name="Miller B."/>
            <person name="Marra M.A."/>
            <person name="Martienssen R."/>
            <person name="McCombie W.R."/>
            <person name="Wilson R.K."/>
            <person name="Murphy G."/>
            <person name="Bancroft I."/>
            <person name="Volckaert G."/>
            <person name="Wambutt R."/>
            <person name="Duesterhoeft A."/>
            <person name="Stiekema W."/>
            <person name="Pohl T."/>
            <person name="Entian K.-D."/>
            <person name="Terryn N."/>
            <person name="Hartley N."/>
            <person name="Bent E."/>
            <person name="Johnson S."/>
            <person name="Langham S.-A."/>
            <person name="McCullagh B."/>
            <person name="Robben J."/>
            <person name="Grymonprez B."/>
            <person name="Zimmermann W."/>
            <person name="Ramsperger U."/>
            <person name="Wedler H."/>
            <person name="Balke K."/>
            <person name="Wedler E."/>
            <person name="Peters S."/>
            <person name="van Staveren M."/>
            <person name="Dirkse W."/>
            <person name="Mooijman P."/>
            <person name="Klein Lankhorst R."/>
            <person name="Weitzenegger T."/>
            <person name="Bothe G."/>
            <person name="Rose M."/>
            <person name="Hauf J."/>
            <person name="Berneiser S."/>
            <person name="Hempel S."/>
            <person name="Feldpausch M."/>
            <person name="Lamberth S."/>
            <person name="Villarroel R."/>
            <person name="Gielen J."/>
            <person name="Ardiles W."/>
            <person name="Bents O."/>
            <person name="Lemcke K."/>
            <person name="Kolesov G."/>
            <person name="Mayer K.F.X."/>
            <person name="Rudd S."/>
            <person name="Schoof H."/>
            <person name="Schueller C."/>
            <person name="Zaccaria P."/>
            <person name="Mewes H.-W."/>
            <person name="Bevan M."/>
            <person name="Fransz P.F."/>
        </authorList>
    </citation>
    <scope>NUCLEOTIDE SEQUENCE [LARGE SCALE GENOMIC DNA]</scope>
    <source>
        <strain>cv. Columbia</strain>
    </source>
</reference>
<reference key="4">
    <citation type="journal article" date="2017" name="Plant J.">
        <title>Araport11: a complete reannotation of the Arabidopsis thaliana reference genome.</title>
        <authorList>
            <person name="Cheng C.Y."/>
            <person name="Krishnakumar V."/>
            <person name="Chan A.P."/>
            <person name="Thibaud-Nissen F."/>
            <person name="Schobel S."/>
            <person name="Town C.D."/>
        </authorList>
    </citation>
    <scope>GENOME REANNOTATION</scope>
    <source>
        <strain>cv. Columbia</strain>
    </source>
</reference>
<reference key="5">
    <citation type="submission" date="2006-09" db="EMBL/GenBank/DDBJ databases">
        <title>Arabidopsis ORF clones.</title>
        <authorList>
            <person name="Kim C.J."/>
            <person name="Chen H."/>
            <person name="Quinitio C."/>
            <person name="Shinn P."/>
            <person name="Ecker J.R."/>
        </authorList>
    </citation>
    <scope>NUCLEOTIDE SEQUENCE [LARGE SCALE MRNA]</scope>
    <source>
        <strain>cv. Columbia</strain>
    </source>
</reference>
<reference key="6">
    <citation type="journal article" date="2001" name="EMBO J.">
        <title>The NAF domain defines a novel protein-protein interaction module conserved in Ca(2+)-regulated kinases.</title>
        <authorList>
            <person name="Albrecht V."/>
            <person name="Ritz O."/>
            <person name="Linder S."/>
            <person name="Harter K."/>
            <person name="Kudla J."/>
        </authorList>
    </citation>
    <scope>INTERACTION WITH CBL2; CBL3 AND CBL5</scope>
</reference>
<reference key="7">
    <citation type="journal article" date="2003" name="Plant Physiol.">
        <title>The Arabidopsis CDPK-SnRK superfamily of protein kinases.</title>
        <authorList>
            <person name="Hrabak E.M."/>
            <person name="Chan C.W.M."/>
            <person name="Gribskov M."/>
            <person name="Harper J.F."/>
            <person name="Choi J.H."/>
            <person name="Halford N."/>
            <person name="Kudla J."/>
            <person name="Luan S."/>
            <person name="Nimmo H.G."/>
            <person name="Sussman M.R."/>
            <person name="Thomas M."/>
            <person name="Walker-Simmons K."/>
            <person name="Zhu J.-K."/>
            <person name="Harmon A.C."/>
        </authorList>
    </citation>
    <scope>GENE FAMILY</scope>
    <scope>NOMENCLATURE</scope>
</reference>
<sequence>MENKPSVLTERYEVGRLLGQGTFAKVYFGRSNHTNESVAIKMIDKDKVMRVGLSQQIKREISVMRIAKHPNVVELYEVMATKSRIYFVIEYCKGGELFNKVAKGKLKEDVAWKYFYQLISAVDFCHSRGVYHRDIKPENLLLDDNDNLKVSDFGLSALADCKRQDGLLHTTCGTPAYVAPEVINRKGYEGTKADIWSCGVVLFVLLAGYLPFHDTNLMEMYRKIGKADFKCPSWFAPEVKRLLCKMLDPNHETRITIAKIKESSWFRKGLHLKQKKMEKMEKQQVREATNPMEAGGSGQNENGENHEPPRLATLNAFDIIALSTGFGLAGLFGDVYDKRESRFASQKPASEIISKLVEVAKCLKLKIRKQGAGLFKLERVKEGKNGILTMDAEIFQVTPTFHLVEVKKCNGDTMEYQKLVEEDLRPALADIVWVWQGEKEKEEQLLQDEQGEQEPS</sequence>
<name>CIPK2_ARATH</name>
<dbReference type="EC" id="2.7.11.1"/>
<dbReference type="EMBL" id="AF286050">
    <property type="protein sequence ID" value="AAF86506.1"/>
    <property type="molecule type" value="mRNA"/>
</dbReference>
<dbReference type="EMBL" id="AB010697">
    <property type="protein sequence ID" value="BAB11165.1"/>
    <property type="molecule type" value="Genomic_DNA"/>
</dbReference>
<dbReference type="EMBL" id="AL163652">
    <property type="protein sequence ID" value="CAB87263.1"/>
    <property type="molecule type" value="Genomic_DNA"/>
</dbReference>
<dbReference type="EMBL" id="CP002688">
    <property type="protein sequence ID" value="AED91105.1"/>
    <property type="molecule type" value="Genomic_DNA"/>
</dbReference>
<dbReference type="EMBL" id="BT028980">
    <property type="protein sequence ID" value="ABI93889.1"/>
    <property type="molecule type" value="mRNA"/>
</dbReference>
<dbReference type="PIR" id="T48478">
    <property type="entry name" value="T48478"/>
</dbReference>
<dbReference type="RefSeq" id="NP_196324.1">
    <property type="nucleotide sequence ID" value="NM_120789.3"/>
</dbReference>
<dbReference type="SMR" id="Q9LYQ8"/>
<dbReference type="BioGRID" id="15877">
    <property type="interactions" value="7"/>
</dbReference>
<dbReference type="FunCoup" id="Q9LYQ8">
    <property type="interactions" value="1041"/>
</dbReference>
<dbReference type="IntAct" id="Q9LYQ8">
    <property type="interactions" value="5"/>
</dbReference>
<dbReference type="STRING" id="3702.Q9LYQ8"/>
<dbReference type="iPTMnet" id="Q9LYQ8"/>
<dbReference type="PaxDb" id="3702-AT5G07070.1"/>
<dbReference type="ProteomicsDB" id="246854"/>
<dbReference type="EnsemblPlants" id="AT5G07070.1">
    <property type="protein sequence ID" value="AT5G07070.1"/>
    <property type="gene ID" value="AT5G07070"/>
</dbReference>
<dbReference type="GeneID" id="830598"/>
<dbReference type="Gramene" id="AT5G07070.1">
    <property type="protein sequence ID" value="AT5G07070.1"/>
    <property type="gene ID" value="AT5G07070"/>
</dbReference>
<dbReference type="KEGG" id="ath:AT5G07070"/>
<dbReference type="Araport" id="AT5G07070"/>
<dbReference type="TAIR" id="AT5G07070">
    <property type="gene designation" value="CIPK2"/>
</dbReference>
<dbReference type="eggNOG" id="KOG0583">
    <property type="taxonomic scope" value="Eukaryota"/>
</dbReference>
<dbReference type="HOGENOM" id="CLU_000288_59_0_1"/>
<dbReference type="InParanoid" id="Q9LYQ8"/>
<dbReference type="OMA" id="QEVEQHS"/>
<dbReference type="OrthoDB" id="193931at2759"/>
<dbReference type="PhylomeDB" id="Q9LYQ8"/>
<dbReference type="PRO" id="PR:Q9LYQ8"/>
<dbReference type="Proteomes" id="UP000006548">
    <property type="component" value="Chromosome 5"/>
</dbReference>
<dbReference type="ExpressionAtlas" id="Q9LYQ8">
    <property type="expression patterns" value="baseline and differential"/>
</dbReference>
<dbReference type="GO" id="GO:0005524">
    <property type="term" value="F:ATP binding"/>
    <property type="evidence" value="ECO:0007669"/>
    <property type="project" value="UniProtKB-KW"/>
</dbReference>
<dbReference type="GO" id="GO:0106310">
    <property type="term" value="F:protein serine kinase activity"/>
    <property type="evidence" value="ECO:0007669"/>
    <property type="project" value="RHEA"/>
</dbReference>
<dbReference type="GO" id="GO:0004674">
    <property type="term" value="F:protein serine/threonine kinase activity"/>
    <property type="evidence" value="ECO:0007669"/>
    <property type="project" value="UniProtKB-KW"/>
</dbReference>
<dbReference type="GO" id="GO:0007165">
    <property type="term" value="P:signal transduction"/>
    <property type="evidence" value="ECO:0007669"/>
    <property type="project" value="InterPro"/>
</dbReference>
<dbReference type="CDD" id="cd12195">
    <property type="entry name" value="CIPK_C"/>
    <property type="match status" value="1"/>
</dbReference>
<dbReference type="FunFam" id="1.10.510.10:FF:000279">
    <property type="entry name" value="Non-specific serine/threonine protein kinase"/>
    <property type="match status" value="1"/>
</dbReference>
<dbReference type="FunFam" id="3.30.200.20:FF:000096">
    <property type="entry name" value="Non-specific serine/threonine protein kinase"/>
    <property type="match status" value="1"/>
</dbReference>
<dbReference type="FunFam" id="3.30.310.80:FF:000005">
    <property type="entry name" value="Non-specific serine/threonine protein kinase"/>
    <property type="match status" value="1"/>
</dbReference>
<dbReference type="Gene3D" id="3.30.310.80">
    <property type="entry name" value="Kinase associated domain 1, KA1"/>
    <property type="match status" value="1"/>
</dbReference>
<dbReference type="Gene3D" id="1.10.510.10">
    <property type="entry name" value="Transferase(Phosphotransferase) domain 1"/>
    <property type="match status" value="1"/>
</dbReference>
<dbReference type="InterPro" id="IPR011009">
    <property type="entry name" value="Kinase-like_dom_sf"/>
</dbReference>
<dbReference type="InterPro" id="IPR018451">
    <property type="entry name" value="NAF/FISL_domain"/>
</dbReference>
<dbReference type="InterPro" id="IPR004041">
    <property type="entry name" value="NAF_dom"/>
</dbReference>
<dbReference type="InterPro" id="IPR000719">
    <property type="entry name" value="Prot_kinase_dom"/>
</dbReference>
<dbReference type="InterPro" id="IPR017441">
    <property type="entry name" value="Protein_kinase_ATP_BS"/>
</dbReference>
<dbReference type="InterPro" id="IPR008271">
    <property type="entry name" value="Ser/Thr_kinase_AS"/>
</dbReference>
<dbReference type="PANTHER" id="PTHR43895">
    <property type="entry name" value="CALCIUM/CALMODULIN-DEPENDENT PROTEIN KINASE KINASE-RELATED"/>
    <property type="match status" value="1"/>
</dbReference>
<dbReference type="PANTHER" id="PTHR43895:SF120">
    <property type="entry name" value="CBL-INTERACTING SERINE_THREONINE-PROTEIN KINASE 2"/>
    <property type="match status" value="1"/>
</dbReference>
<dbReference type="Pfam" id="PF03822">
    <property type="entry name" value="NAF"/>
    <property type="match status" value="1"/>
</dbReference>
<dbReference type="Pfam" id="PF00069">
    <property type="entry name" value="Pkinase"/>
    <property type="match status" value="1"/>
</dbReference>
<dbReference type="SMART" id="SM00220">
    <property type="entry name" value="S_TKc"/>
    <property type="match status" value="1"/>
</dbReference>
<dbReference type="SUPFAM" id="SSF56112">
    <property type="entry name" value="Protein kinase-like (PK-like)"/>
    <property type="match status" value="1"/>
</dbReference>
<dbReference type="PROSITE" id="PS50816">
    <property type="entry name" value="NAF"/>
    <property type="match status" value="1"/>
</dbReference>
<dbReference type="PROSITE" id="PS00107">
    <property type="entry name" value="PROTEIN_KINASE_ATP"/>
    <property type="match status" value="1"/>
</dbReference>
<dbReference type="PROSITE" id="PS50011">
    <property type="entry name" value="PROTEIN_KINASE_DOM"/>
    <property type="match status" value="1"/>
</dbReference>
<dbReference type="PROSITE" id="PS00108">
    <property type="entry name" value="PROTEIN_KINASE_ST"/>
    <property type="match status" value="1"/>
</dbReference>
<comment type="function">
    <text evidence="1">CIPK serine-threonine protein kinases interact with CBL proteins. Binding of a CBL protein to the regulatory NAF domain of CIPK protein lead to the activation of the kinase in a calcium-dependent manner (By similarity).</text>
</comment>
<comment type="catalytic activity">
    <reaction>
        <text>L-seryl-[protein] + ATP = O-phospho-L-seryl-[protein] + ADP + H(+)</text>
        <dbReference type="Rhea" id="RHEA:17989"/>
        <dbReference type="Rhea" id="RHEA-COMP:9863"/>
        <dbReference type="Rhea" id="RHEA-COMP:11604"/>
        <dbReference type="ChEBI" id="CHEBI:15378"/>
        <dbReference type="ChEBI" id="CHEBI:29999"/>
        <dbReference type="ChEBI" id="CHEBI:30616"/>
        <dbReference type="ChEBI" id="CHEBI:83421"/>
        <dbReference type="ChEBI" id="CHEBI:456216"/>
        <dbReference type="EC" id="2.7.11.1"/>
    </reaction>
</comment>
<comment type="catalytic activity">
    <reaction>
        <text>L-threonyl-[protein] + ATP = O-phospho-L-threonyl-[protein] + ADP + H(+)</text>
        <dbReference type="Rhea" id="RHEA:46608"/>
        <dbReference type="Rhea" id="RHEA-COMP:11060"/>
        <dbReference type="Rhea" id="RHEA-COMP:11605"/>
        <dbReference type="ChEBI" id="CHEBI:15378"/>
        <dbReference type="ChEBI" id="CHEBI:30013"/>
        <dbReference type="ChEBI" id="CHEBI:30616"/>
        <dbReference type="ChEBI" id="CHEBI:61977"/>
        <dbReference type="ChEBI" id="CHEBI:456216"/>
        <dbReference type="EC" id="2.7.11.1"/>
    </reaction>
</comment>
<comment type="cofactor">
    <cofactor evidence="1">
        <name>Mn(2+)</name>
        <dbReference type="ChEBI" id="CHEBI:29035"/>
    </cofactor>
</comment>
<comment type="subunit">
    <text evidence="8 9">Interacts with CBL2, CBL3 and CBL5.</text>
</comment>
<comment type="interaction">
    <interactant intactId="EBI-1748707">
        <id>Q9LYQ8</id>
    </interactant>
    <interactant intactId="EBI-974530">
        <id>O81445</id>
        <label>CBL1</label>
    </interactant>
    <organismsDiffer>false</organismsDiffer>
    <experiments>3</experiments>
</comment>
<comment type="domain">
    <text evidence="1">The activation loop within the kinase domain is the target of phosphorylation/activation by upstream protein kinases. The PPI motif mediates the interaction with the ABI (abscisic acid-insensitive) phosphatases (By similarity).</text>
</comment>
<comment type="similarity">
    <text evidence="10">Belongs to the protein kinase superfamily. CAMK Ser/Thr protein kinase family. SNF1 subfamily.</text>
</comment>